<accession>P71079</accession>
<accession>Q796Z2</accession>
<dbReference type="EC" id="1.3.1.104"/>
<dbReference type="EMBL" id="D85082">
    <property type="protein sequence ID" value="BAA24484.1"/>
    <property type="molecule type" value="Genomic_DNA"/>
</dbReference>
<dbReference type="EMBL" id="Z82044">
    <property type="protein sequence ID" value="CAB04808.1"/>
    <property type="molecule type" value="Genomic_DNA"/>
</dbReference>
<dbReference type="EMBL" id="AL009126">
    <property type="protein sequence ID" value="CAB12693.1"/>
    <property type="molecule type" value="Genomic_DNA"/>
</dbReference>
<dbReference type="PIR" id="B69802">
    <property type="entry name" value="B69802"/>
</dbReference>
<dbReference type="RefSeq" id="NP_388745.1">
    <property type="nucleotide sequence ID" value="NC_000964.3"/>
</dbReference>
<dbReference type="RefSeq" id="WP_003223262.1">
    <property type="nucleotide sequence ID" value="NZ_OZ025638.1"/>
</dbReference>
<dbReference type="PDB" id="3OIC">
    <property type="method" value="X-ray"/>
    <property type="resolution" value="2.20 A"/>
    <property type="chains" value="A/D=1-250"/>
</dbReference>
<dbReference type="PDB" id="3OID">
    <property type="method" value="X-ray"/>
    <property type="resolution" value="1.80 A"/>
    <property type="chains" value="A/B/C/D=1-250"/>
</dbReference>
<dbReference type="PDBsum" id="3OIC"/>
<dbReference type="PDBsum" id="3OID"/>
<dbReference type="SMR" id="P71079"/>
<dbReference type="FunCoup" id="P71079">
    <property type="interactions" value="241"/>
</dbReference>
<dbReference type="IntAct" id="P71079">
    <property type="interactions" value="1"/>
</dbReference>
<dbReference type="MINT" id="P71079"/>
<dbReference type="STRING" id="224308.BSU08650"/>
<dbReference type="SwissLipids" id="SLP:000001796"/>
<dbReference type="PaxDb" id="224308-BSU08650"/>
<dbReference type="EnsemblBacteria" id="CAB12693">
    <property type="protein sequence ID" value="CAB12693"/>
    <property type="gene ID" value="BSU_08650"/>
</dbReference>
<dbReference type="GeneID" id="86874682"/>
<dbReference type="GeneID" id="939223"/>
<dbReference type="KEGG" id="bsu:BSU08650"/>
<dbReference type="PATRIC" id="fig|224308.179.peg.933"/>
<dbReference type="eggNOG" id="COG1028">
    <property type="taxonomic scope" value="Bacteria"/>
</dbReference>
<dbReference type="InParanoid" id="P71079"/>
<dbReference type="OrthoDB" id="9803333at2"/>
<dbReference type="PhylomeDB" id="P71079"/>
<dbReference type="BioCyc" id="BSUB:BSU08650-MONOMER"/>
<dbReference type="BioCyc" id="MetaCyc:BSU08650-MONOMER"/>
<dbReference type="BRENDA" id="1.3.1.10">
    <property type="organism ID" value="658"/>
</dbReference>
<dbReference type="BRENDA" id="1.3.1.104">
    <property type="organism ID" value="658"/>
</dbReference>
<dbReference type="BRENDA" id="1.3.1.39">
    <property type="organism ID" value="658"/>
</dbReference>
<dbReference type="SABIO-RK" id="P71079"/>
<dbReference type="UniPathway" id="UPA00094"/>
<dbReference type="EvolutionaryTrace" id="P71079"/>
<dbReference type="Proteomes" id="UP000001570">
    <property type="component" value="Chromosome"/>
</dbReference>
<dbReference type="GO" id="GO:0004318">
    <property type="term" value="F:enoyl-[acyl-carrier-protein] reductase (NADH) activity"/>
    <property type="evidence" value="ECO:0000314"/>
    <property type="project" value="UniProtKB"/>
</dbReference>
<dbReference type="GO" id="GO:0141148">
    <property type="term" value="F:enoyl-[acyl-carrier-protein] reductase (NADPH) activity"/>
    <property type="evidence" value="ECO:0007669"/>
    <property type="project" value="UniProtKB-EC"/>
</dbReference>
<dbReference type="GO" id="GO:0050661">
    <property type="term" value="F:NADP binding"/>
    <property type="evidence" value="ECO:0000314"/>
    <property type="project" value="UniProtKB"/>
</dbReference>
<dbReference type="GO" id="GO:0016616">
    <property type="term" value="F:oxidoreductase activity, acting on the CH-OH group of donors, NAD or NADP as acceptor"/>
    <property type="evidence" value="ECO:0000318"/>
    <property type="project" value="GO_Central"/>
</dbReference>
<dbReference type="GO" id="GO:0030497">
    <property type="term" value="P:fatty acid elongation"/>
    <property type="evidence" value="ECO:0000314"/>
    <property type="project" value="UniProtKB"/>
</dbReference>
<dbReference type="CDD" id="cd05359">
    <property type="entry name" value="ChcA_like_SDR_c"/>
    <property type="match status" value="1"/>
</dbReference>
<dbReference type="FunFam" id="3.40.50.720:FF:000491">
    <property type="entry name" value="Enoyl-[acyl-carrier-protein] reductase FabL"/>
    <property type="match status" value="1"/>
</dbReference>
<dbReference type="Gene3D" id="3.40.50.720">
    <property type="entry name" value="NAD(P)-binding Rossmann-like Domain"/>
    <property type="match status" value="1"/>
</dbReference>
<dbReference type="InterPro" id="IPR036291">
    <property type="entry name" value="NAD(P)-bd_dom_sf"/>
</dbReference>
<dbReference type="InterPro" id="IPR002347">
    <property type="entry name" value="SDR_fam"/>
</dbReference>
<dbReference type="NCBIfam" id="NF005975">
    <property type="entry name" value="PRK08063.1"/>
    <property type="match status" value="1"/>
</dbReference>
<dbReference type="PANTHER" id="PTHR43639">
    <property type="entry name" value="OXIDOREDUCTASE, SHORT-CHAIN DEHYDROGENASE/REDUCTASE FAMILY (AFU_ORTHOLOGUE AFUA_5G02870)"/>
    <property type="match status" value="1"/>
</dbReference>
<dbReference type="PANTHER" id="PTHR43639:SF1">
    <property type="entry name" value="SHORT-CHAIN DEHYDROGENASE_REDUCTASE FAMILY PROTEIN"/>
    <property type="match status" value="1"/>
</dbReference>
<dbReference type="Pfam" id="PF13561">
    <property type="entry name" value="adh_short_C2"/>
    <property type="match status" value="1"/>
</dbReference>
<dbReference type="PRINTS" id="PR00081">
    <property type="entry name" value="GDHRDH"/>
</dbReference>
<dbReference type="PRINTS" id="PR00080">
    <property type="entry name" value="SDRFAMILY"/>
</dbReference>
<dbReference type="SUPFAM" id="SSF51735">
    <property type="entry name" value="NAD(P)-binding Rossmann-fold domains"/>
    <property type="match status" value="1"/>
</dbReference>
<protein>
    <recommendedName>
        <fullName>Enoyl-[acyl-carrier-protein] reductase [NADPH] FabL</fullName>
        <shortName>ENR</shortName>
        <ecNumber>1.3.1.104</ecNumber>
    </recommendedName>
    <alternativeName>
        <fullName>Enoyl-acyl carrier protein reductase III</fullName>
    </alternativeName>
    <alternativeName>
        <fullName>NADPH-dependent enoyl-ACP reductase</fullName>
    </alternativeName>
</protein>
<reference key="1">
    <citation type="journal article" date="1996" name="DNA Res.">
        <title>Cloning and sequencing of a 27.8-kb nucleotide sequence of the 79 degrees-81 degrees region of the Bacillus subtilis genome containing the sspE locus.</title>
        <authorList>
            <person name="Yamamoto H."/>
            <person name="Uchiyama S."/>
            <person name="Sekiguchi J."/>
        </authorList>
    </citation>
    <scope>NUCLEOTIDE SEQUENCE [GENOMIC DNA]</scope>
</reference>
<reference key="2">
    <citation type="journal article" date="1997" name="Microbiology">
        <title>The Bacillus subtilis 168 chromosome from sspE to katA.</title>
        <authorList>
            <person name="Cummings N.J."/>
            <person name="Connerton I.F."/>
        </authorList>
    </citation>
    <scope>NUCLEOTIDE SEQUENCE [GENOMIC DNA]</scope>
    <source>
        <strain>168</strain>
    </source>
</reference>
<reference key="3">
    <citation type="journal article" date="1997" name="Nature">
        <title>The complete genome sequence of the Gram-positive bacterium Bacillus subtilis.</title>
        <authorList>
            <person name="Kunst F."/>
            <person name="Ogasawara N."/>
            <person name="Moszer I."/>
            <person name="Albertini A.M."/>
            <person name="Alloni G."/>
            <person name="Azevedo V."/>
            <person name="Bertero M.G."/>
            <person name="Bessieres P."/>
            <person name="Bolotin A."/>
            <person name="Borchert S."/>
            <person name="Borriss R."/>
            <person name="Boursier L."/>
            <person name="Brans A."/>
            <person name="Braun M."/>
            <person name="Brignell S.C."/>
            <person name="Bron S."/>
            <person name="Brouillet S."/>
            <person name="Bruschi C.V."/>
            <person name="Caldwell B."/>
            <person name="Capuano V."/>
            <person name="Carter N.M."/>
            <person name="Choi S.-K."/>
            <person name="Codani J.-J."/>
            <person name="Connerton I.F."/>
            <person name="Cummings N.J."/>
            <person name="Daniel R.A."/>
            <person name="Denizot F."/>
            <person name="Devine K.M."/>
            <person name="Duesterhoeft A."/>
            <person name="Ehrlich S.D."/>
            <person name="Emmerson P.T."/>
            <person name="Entian K.-D."/>
            <person name="Errington J."/>
            <person name="Fabret C."/>
            <person name="Ferrari E."/>
            <person name="Foulger D."/>
            <person name="Fritz C."/>
            <person name="Fujita M."/>
            <person name="Fujita Y."/>
            <person name="Fuma S."/>
            <person name="Galizzi A."/>
            <person name="Galleron N."/>
            <person name="Ghim S.-Y."/>
            <person name="Glaser P."/>
            <person name="Goffeau A."/>
            <person name="Golightly E.J."/>
            <person name="Grandi G."/>
            <person name="Guiseppi G."/>
            <person name="Guy B.J."/>
            <person name="Haga K."/>
            <person name="Haiech J."/>
            <person name="Harwood C.R."/>
            <person name="Henaut A."/>
            <person name="Hilbert H."/>
            <person name="Holsappel S."/>
            <person name="Hosono S."/>
            <person name="Hullo M.-F."/>
            <person name="Itaya M."/>
            <person name="Jones L.-M."/>
            <person name="Joris B."/>
            <person name="Karamata D."/>
            <person name="Kasahara Y."/>
            <person name="Klaerr-Blanchard M."/>
            <person name="Klein C."/>
            <person name="Kobayashi Y."/>
            <person name="Koetter P."/>
            <person name="Koningstein G."/>
            <person name="Krogh S."/>
            <person name="Kumano M."/>
            <person name="Kurita K."/>
            <person name="Lapidus A."/>
            <person name="Lardinois S."/>
            <person name="Lauber J."/>
            <person name="Lazarevic V."/>
            <person name="Lee S.-M."/>
            <person name="Levine A."/>
            <person name="Liu H."/>
            <person name="Masuda S."/>
            <person name="Mauel C."/>
            <person name="Medigue C."/>
            <person name="Medina N."/>
            <person name="Mellado R.P."/>
            <person name="Mizuno M."/>
            <person name="Moestl D."/>
            <person name="Nakai S."/>
            <person name="Noback M."/>
            <person name="Noone D."/>
            <person name="O'Reilly M."/>
            <person name="Ogawa K."/>
            <person name="Ogiwara A."/>
            <person name="Oudega B."/>
            <person name="Park S.-H."/>
            <person name="Parro V."/>
            <person name="Pohl T.M."/>
            <person name="Portetelle D."/>
            <person name="Porwollik S."/>
            <person name="Prescott A.M."/>
            <person name="Presecan E."/>
            <person name="Pujic P."/>
            <person name="Purnelle B."/>
            <person name="Rapoport G."/>
            <person name="Rey M."/>
            <person name="Reynolds S."/>
            <person name="Rieger M."/>
            <person name="Rivolta C."/>
            <person name="Rocha E."/>
            <person name="Roche B."/>
            <person name="Rose M."/>
            <person name="Sadaie Y."/>
            <person name="Sato T."/>
            <person name="Scanlan E."/>
            <person name="Schleich S."/>
            <person name="Schroeter R."/>
            <person name="Scoffone F."/>
            <person name="Sekiguchi J."/>
            <person name="Sekowska A."/>
            <person name="Seror S.J."/>
            <person name="Serror P."/>
            <person name="Shin B.-S."/>
            <person name="Soldo B."/>
            <person name="Sorokin A."/>
            <person name="Tacconi E."/>
            <person name="Takagi T."/>
            <person name="Takahashi H."/>
            <person name="Takemaru K."/>
            <person name="Takeuchi M."/>
            <person name="Tamakoshi A."/>
            <person name="Tanaka T."/>
            <person name="Terpstra P."/>
            <person name="Tognoni A."/>
            <person name="Tosato V."/>
            <person name="Uchiyama S."/>
            <person name="Vandenbol M."/>
            <person name="Vannier F."/>
            <person name="Vassarotti A."/>
            <person name="Viari A."/>
            <person name="Wambutt R."/>
            <person name="Wedler E."/>
            <person name="Wedler H."/>
            <person name="Weitzenegger T."/>
            <person name="Winters P."/>
            <person name="Wipat A."/>
            <person name="Yamamoto H."/>
            <person name="Yamane K."/>
            <person name="Yasumoto K."/>
            <person name="Yata K."/>
            <person name="Yoshida K."/>
            <person name="Yoshikawa H.-F."/>
            <person name="Zumstein E."/>
            <person name="Yoshikawa H."/>
            <person name="Danchin A."/>
        </authorList>
    </citation>
    <scope>NUCLEOTIDE SEQUENCE [LARGE SCALE GENOMIC DNA]</scope>
    <source>
        <strain>168</strain>
    </source>
</reference>
<reference key="4">
    <citation type="journal article" date="1999" name="Microbiology">
        <title>Transcription of genes near the sspE locus of the Bacillus subtilis genome.</title>
        <authorList>
            <person name="Yamamoto H."/>
            <person name="Mori M."/>
            <person name="Sekiguchi J."/>
        </authorList>
    </citation>
    <scope>INDUCTION</scope>
    <source>
        <strain>168</strain>
    </source>
</reference>
<reference key="5">
    <citation type="journal article" date="2000" name="J. Biol. Chem.">
        <title>The enoyl-[acyl-carrier-protein] reductases FabI and FabL from Bacillus subtilis.</title>
        <authorList>
            <person name="Heath R.J."/>
            <person name="Su N."/>
            <person name="Murphy C.K."/>
            <person name="Rock C.O."/>
        </authorList>
    </citation>
    <scope>FUNCTION AS AN ENOYL-ACP REDUCTASE AND IN FATTY ACID BIOSYNTHESIS</scope>
    <scope>CATALYTIC ACTIVITY</scope>
    <scope>BIOPHYSICOCHEMICAL PROPERTIES</scope>
    <scope>DISRUPTION PHENOTYPE</scope>
    <scope>ACTIVITY REGULATION</scope>
</reference>
<reference key="6">
    <citation type="journal article" date="2007" name="Acta Crystallogr. F">
        <title>Crystallization and preliminary X-ray crystallographic analysis of enoyl-ACP reductase III (FabL) from Bacillus subtilis.</title>
        <authorList>
            <person name="Kim K.-H."/>
            <person name="Park J.K."/>
            <person name="Ha B.H."/>
            <person name="Moon J.H."/>
            <person name="Kim E.E."/>
        </authorList>
    </citation>
    <scope>CRYSTALLIZATION</scope>
    <source>
        <strain>168</strain>
    </source>
</reference>
<reference key="7">
    <citation type="journal article" date="2011" name="J. Mol. Biol.">
        <title>Crystal structures of Enoyl-ACP reductases I (FabI) and III (FabL) from B. subtilis.</title>
        <authorList>
            <person name="Kim K.H."/>
            <person name="Ha B.H."/>
            <person name="Kim S.J."/>
            <person name="Hong S.K."/>
            <person name="Hwang K.Y."/>
            <person name="Kim E.E."/>
        </authorList>
    </citation>
    <scope>X-RAY CRYSTALLOGRAPHY (1.8 ANGSTROMS) IN COMPLEX WITH NADP AND INHIBITOR</scope>
    <scope>SUBUNIT</scope>
    <scope>ACTIVE SITE</scope>
</reference>
<gene>
    <name type="primary">fabL</name>
    <name type="synonym">yfhR</name>
    <name type="synonym">ygaA</name>
    <name type="ordered locus">BSU08650</name>
</gene>
<feature type="chain" id="PRO_0000377006" description="Enoyl-[acyl-carrier-protein] reductase [NADPH] FabL">
    <location>
        <begin position="1"/>
        <end position="250"/>
    </location>
</feature>
<feature type="active site" description="Proton acceptor" evidence="5">
    <location>
        <position position="151"/>
    </location>
</feature>
<feature type="active site" description="Proton acceptor" evidence="5">
    <location>
        <position position="158"/>
    </location>
</feature>
<feature type="binding site" evidence="3 6">
    <location>
        <begin position="13"/>
        <end position="16"/>
    </location>
    <ligand>
        <name>NADP(+)</name>
        <dbReference type="ChEBI" id="CHEBI:58349"/>
    </ligand>
</feature>
<feature type="binding site" evidence="3 6">
    <location>
        <begin position="36"/>
        <end position="38"/>
    </location>
    <ligand>
        <name>NADP(+)</name>
        <dbReference type="ChEBI" id="CHEBI:58349"/>
    </ligand>
</feature>
<feature type="binding site" evidence="3 6">
    <location>
        <begin position="62"/>
        <end position="63"/>
    </location>
    <ligand>
        <name>NADP(+)</name>
        <dbReference type="ChEBI" id="CHEBI:58349"/>
    </ligand>
</feature>
<feature type="binding site" evidence="3 6">
    <location>
        <position position="89"/>
    </location>
    <ligand>
        <name>NADP(+)</name>
        <dbReference type="ChEBI" id="CHEBI:58349"/>
    </ligand>
</feature>
<feature type="binding site" evidence="3 6">
    <location>
        <position position="158"/>
    </location>
    <ligand>
        <name>NADP(+)</name>
        <dbReference type="ChEBI" id="CHEBI:58349"/>
    </ligand>
</feature>
<feature type="binding site" evidence="3 6">
    <location>
        <begin position="187"/>
        <end position="189"/>
    </location>
    <ligand>
        <name>NADP(+)</name>
        <dbReference type="ChEBI" id="CHEBI:58349"/>
    </ligand>
</feature>
<feature type="strand" evidence="7">
    <location>
        <begin position="6"/>
        <end position="11"/>
    </location>
</feature>
<feature type="helix" evidence="7">
    <location>
        <begin position="15"/>
        <end position="26"/>
    </location>
</feature>
<feature type="strand" evidence="7">
    <location>
        <begin position="30"/>
        <end position="37"/>
    </location>
</feature>
<feature type="helix" evidence="7">
    <location>
        <begin position="39"/>
        <end position="50"/>
    </location>
</feature>
<feature type="turn" evidence="7">
    <location>
        <begin position="51"/>
        <end position="53"/>
    </location>
</feature>
<feature type="strand" evidence="7">
    <location>
        <begin position="56"/>
        <end position="60"/>
    </location>
</feature>
<feature type="helix" evidence="7">
    <location>
        <begin position="66"/>
        <end position="80"/>
    </location>
</feature>
<feature type="strand" evidence="7">
    <location>
        <begin position="85"/>
        <end position="88"/>
    </location>
</feature>
<feature type="helix" evidence="7">
    <location>
        <begin position="98"/>
        <end position="100"/>
    </location>
</feature>
<feature type="helix" evidence="7">
    <location>
        <begin position="103"/>
        <end position="113"/>
    </location>
</feature>
<feature type="helix" evidence="7">
    <location>
        <begin position="115"/>
        <end position="129"/>
    </location>
</feature>
<feature type="turn" evidence="7">
    <location>
        <begin position="130"/>
        <end position="132"/>
    </location>
</feature>
<feature type="strand" evidence="7">
    <location>
        <begin position="134"/>
        <end position="141"/>
    </location>
</feature>
<feature type="helix" evidence="7">
    <location>
        <begin position="142"/>
        <end position="144"/>
    </location>
</feature>
<feature type="helix" evidence="7">
    <location>
        <begin position="152"/>
        <end position="171"/>
    </location>
</feature>
<feature type="helix" evidence="7">
    <location>
        <begin position="173"/>
        <end position="175"/>
    </location>
</feature>
<feature type="strand" evidence="7">
    <location>
        <begin position="177"/>
        <end position="184"/>
    </location>
</feature>
<feature type="helix" evidence="7">
    <location>
        <begin position="190"/>
        <end position="194"/>
    </location>
</feature>
<feature type="helix" evidence="7">
    <location>
        <begin position="198"/>
        <end position="208"/>
    </location>
</feature>
<feature type="helix" evidence="7">
    <location>
        <begin position="217"/>
        <end position="227"/>
    </location>
</feature>
<feature type="turn" evidence="7">
    <location>
        <begin position="231"/>
        <end position="234"/>
    </location>
</feature>
<feature type="strand" evidence="7">
    <location>
        <begin position="239"/>
        <end position="243"/>
    </location>
</feature>
<feature type="helix" evidence="7">
    <location>
        <begin position="246"/>
        <end position="248"/>
    </location>
</feature>
<evidence type="ECO:0000269" key="1">
    <source>
    </source>
</evidence>
<evidence type="ECO:0000269" key="2">
    <source>
    </source>
</evidence>
<evidence type="ECO:0000269" key="3">
    <source>
    </source>
</evidence>
<evidence type="ECO:0000305" key="4"/>
<evidence type="ECO:0000305" key="5">
    <source>
    </source>
</evidence>
<evidence type="ECO:0007744" key="6">
    <source>
        <dbReference type="PDB" id="3OID"/>
    </source>
</evidence>
<evidence type="ECO:0007829" key="7">
    <source>
        <dbReference type="PDB" id="3OID"/>
    </source>
</evidence>
<proteinExistence type="evidence at protein level"/>
<organism>
    <name type="scientific">Bacillus subtilis (strain 168)</name>
    <dbReference type="NCBI Taxonomy" id="224308"/>
    <lineage>
        <taxon>Bacteria</taxon>
        <taxon>Bacillati</taxon>
        <taxon>Bacillota</taxon>
        <taxon>Bacilli</taxon>
        <taxon>Bacillales</taxon>
        <taxon>Bacillaceae</taxon>
        <taxon>Bacillus</taxon>
    </lineage>
</organism>
<sequence length="250" mass="27178">MEQNKCALVTGSSRGVGKAAAIRLAENGYNIVINYARSKKAALETAEEIEKLGVKVLVVKANVGQPAKIKEMFQQIDETFGRLDVFVNNAASGVLRPVMELEETHWDWTMNINAKALLFCAQEAAKLMEKNGGGHIVSISSLGSIRYLENYTTVGVSKAALEALTRYLAVELSPKQIIVNAVSGGAIDTDALKHFPNREDLLEDARQNTPAGRMVEIKDMVDTVEFLVSSKADMIRGQTIIVDGGRSLLV</sequence>
<comment type="function">
    <text evidence="2">Catalyzes the reduction of a carbon-carbon double bond in an enoyl moiety that is covalently linked to an acyl carrier protein (ACP). It confers resistance to triclosan.</text>
</comment>
<comment type="catalytic activity">
    <reaction evidence="2">
        <text>a 2,3-saturated acyl-[ACP] + NADP(+) = a (2E)-enoyl-[ACP] + NADPH + H(+)</text>
        <dbReference type="Rhea" id="RHEA:22564"/>
        <dbReference type="Rhea" id="RHEA-COMP:9925"/>
        <dbReference type="Rhea" id="RHEA-COMP:9926"/>
        <dbReference type="ChEBI" id="CHEBI:15378"/>
        <dbReference type="ChEBI" id="CHEBI:57783"/>
        <dbReference type="ChEBI" id="CHEBI:58349"/>
        <dbReference type="ChEBI" id="CHEBI:78784"/>
        <dbReference type="ChEBI" id="CHEBI:78785"/>
        <dbReference type="EC" id="1.3.1.104"/>
    </reaction>
    <physiologicalReaction direction="right-to-left" evidence="2">
        <dbReference type="Rhea" id="RHEA:22566"/>
    </physiologicalReaction>
</comment>
<comment type="catalytic activity">
    <reaction evidence="2">
        <text>(2E)-butenoyl-[ACP] + NADPH + H(+) = butanoyl-[ACP] + NADP(+)</text>
        <dbReference type="Rhea" id="RHEA:41812"/>
        <dbReference type="Rhea" id="RHEA-COMP:9627"/>
        <dbReference type="Rhea" id="RHEA-COMP:9628"/>
        <dbReference type="ChEBI" id="CHEBI:15378"/>
        <dbReference type="ChEBI" id="CHEBI:57783"/>
        <dbReference type="ChEBI" id="CHEBI:58349"/>
        <dbReference type="ChEBI" id="CHEBI:78453"/>
        <dbReference type="ChEBI" id="CHEBI:78454"/>
    </reaction>
    <physiologicalReaction direction="left-to-right" evidence="2">
        <dbReference type="Rhea" id="RHEA:41813"/>
    </physiologicalReaction>
</comment>
<comment type="activity regulation">
    <text evidence="2">Inhibited by triclosan.</text>
</comment>
<comment type="biophysicochemical properties">
    <kinetics>
        <KM evidence="2">16 uM for NADPH</KM>
    </kinetics>
</comment>
<comment type="pathway">
    <text>Lipid metabolism; fatty acid biosynthesis.</text>
</comment>
<comment type="subunit">
    <text evidence="3">Homotetramer.</text>
</comment>
<comment type="induction">
    <text evidence="1">Expressed during exponential growth.</text>
</comment>
<comment type="disruption phenotype">
    <text evidence="2">Cells lacking this gene exhibit a 250-fold decrease in the triclosan MIC.</text>
</comment>
<comment type="similarity">
    <text evidence="4">Belongs to the short-chain dehydrogenases/reductases (SDR) family.</text>
</comment>
<name>FABL_BACSU</name>
<keyword id="KW-0002">3D-structure</keyword>
<keyword id="KW-0275">Fatty acid biosynthesis</keyword>
<keyword id="KW-0276">Fatty acid metabolism</keyword>
<keyword id="KW-0444">Lipid biosynthesis</keyword>
<keyword id="KW-0443">Lipid metabolism</keyword>
<keyword id="KW-0521">NADP</keyword>
<keyword id="KW-0560">Oxidoreductase</keyword>
<keyword id="KW-1185">Reference proteome</keyword>